<protein>
    <recommendedName>
        <fullName>Probable nucleoporin Nup54</fullName>
    </recommendedName>
</protein>
<accession>Q9V6B9</accession>
<dbReference type="EMBL" id="AE013599">
    <property type="protein sequence ID" value="AAF58509.1"/>
    <property type="molecule type" value="Genomic_DNA"/>
</dbReference>
<dbReference type="EMBL" id="AY051713">
    <property type="protein sequence ID" value="AAK93137.1"/>
    <property type="molecule type" value="mRNA"/>
</dbReference>
<dbReference type="RefSeq" id="NP_610783.1">
    <property type="nucleotide sequence ID" value="NM_136939.4"/>
</dbReference>
<dbReference type="SMR" id="Q9V6B9"/>
<dbReference type="BioGRID" id="62137">
    <property type="interactions" value="38"/>
</dbReference>
<dbReference type="ComplexPortal" id="CPX-2568">
    <property type="entry name" value="Nuclear pore complex"/>
</dbReference>
<dbReference type="DIP" id="DIP-19285N"/>
<dbReference type="FunCoup" id="Q9V6B9">
    <property type="interactions" value="2884"/>
</dbReference>
<dbReference type="IntAct" id="Q9V6B9">
    <property type="interactions" value="17"/>
</dbReference>
<dbReference type="MINT" id="Q9V6B9"/>
<dbReference type="STRING" id="7227.FBpp0087063"/>
<dbReference type="GlyGen" id="Q9V6B9">
    <property type="glycosylation" value="4 sites, 1 O-linked glycan (1 site)"/>
</dbReference>
<dbReference type="PaxDb" id="7227-FBpp0087063"/>
<dbReference type="DNASU" id="36360"/>
<dbReference type="EnsemblMetazoa" id="FBtr0087952">
    <property type="protein sequence ID" value="FBpp0087063"/>
    <property type="gene ID" value="FBgn0033737"/>
</dbReference>
<dbReference type="GeneID" id="36360"/>
<dbReference type="KEGG" id="dme:Dmel_CG8831"/>
<dbReference type="UCSC" id="CG8831-RA">
    <property type="organism name" value="d. melanogaster"/>
</dbReference>
<dbReference type="AGR" id="FB:FBgn0033737"/>
<dbReference type="CTD" id="53371"/>
<dbReference type="FlyBase" id="FBgn0033737">
    <property type="gene designation" value="Nup54"/>
</dbReference>
<dbReference type="VEuPathDB" id="VectorBase:FBgn0033737"/>
<dbReference type="eggNOG" id="KOG3091">
    <property type="taxonomic scope" value="Eukaryota"/>
</dbReference>
<dbReference type="GeneTree" id="ENSGT00390000013620"/>
<dbReference type="HOGENOM" id="CLU_033371_0_0_1"/>
<dbReference type="InParanoid" id="Q9V6B9"/>
<dbReference type="OMA" id="MMQTRLH"/>
<dbReference type="OrthoDB" id="6162375at2759"/>
<dbReference type="PhylomeDB" id="Q9V6B9"/>
<dbReference type="Reactome" id="R-DME-159227">
    <property type="pathway name" value="Transport of the SLBP independent Mature mRNA"/>
</dbReference>
<dbReference type="Reactome" id="R-DME-159230">
    <property type="pathway name" value="Transport of the SLBP Dependant Mature mRNA"/>
</dbReference>
<dbReference type="Reactome" id="R-DME-159231">
    <property type="pathway name" value="Transport of Mature mRNA Derived from an Intronless Transcript"/>
</dbReference>
<dbReference type="Reactome" id="R-DME-159236">
    <property type="pathway name" value="Transport of Mature mRNA derived from an Intron-Containing Transcript"/>
</dbReference>
<dbReference type="Reactome" id="R-DME-3108214">
    <property type="pathway name" value="SUMOylation of DNA damage response and repair proteins"/>
</dbReference>
<dbReference type="Reactome" id="R-DME-3301854">
    <property type="pathway name" value="Nuclear Pore Complex (NPC) Disassembly"/>
</dbReference>
<dbReference type="Reactome" id="R-DME-4085377">
    <property type="pathway name" value="SUMOylation of SUMOylation proteins"/>
</dbReference>
<dbReference type="Reactome" id="R-DME-4551638">
    <property type="pathway name" value="SUMOylation of chromatin organization proteins"/>
</dbReference>
<dbReference type="Reactome" id="R-DME-4615885">
    <property type="pathway name" value="SUMOylation of DNA replication proteins"/>
</dbReference>
<dbReference type="Reactome" id="R-DME-5578749">
    <property type="pathway name" value="Transcriptional regulation by small RNAs"/>
</dbReference>
<dbReference type="SignaLink" id="Q9V6B9"/>
<dbReference type="BioGRID-ORCS" id="36360">
    <property type="hits" value="0 hits in 1 CRISPR screen"/>
</dbReference>
<dbReference type="GenomeRNAi" id="36360"/>
<dbReference type="PRO" id="PR:Q9V6B9"/>
<dbReference type="Proteomes" id="UP000000803">
    <property type="component" value="Chromosome 2R"/>
</dbReference>
<dbReference type="Bgee" id="FBgn0033737">
    <property type="expression patterns" value="Expressed in egg cell and 75 other cell types or tissues"/>
</dbReference>
<dbReference type="ExpressionAtlas" id="Q9V6B9">
    <property type="expression patterns" value="baseline and differential"/>
</dbReference>
<dbReference type="GO" id="GO:0005643">
    <property type="term" value="C:nuclear pore"/>
    <property type="evidence" value="ECO:0000250"/>
    <property type="project" value="UniProtKB"/>
</dbReference>
<dbReference type="GO" id="GO:0044613">
    <property type="term" value="C:nuclear pore central transport channel"/>
    <property type="evidence" value="ECO:0000318"/>
    <property type="project" value="GO_Central"/>
</dbReference>
<dbReference type="GO" id="GO:0017056">
    <property type="term" value="F:structural constituent of nuclear pore"/>
    <property type="evidence" value="ECO:0000315"/>
    <property type="project" value="FlyBase"/>
</dbReference>
<dbReference type="GO" id="GO:0051028">
    <property type="term" value="P:mRNA transport"/>
    <property type="evidence" value="ECO:0007669"/>
    <property type="project" value="UniProtKB-KW"/>
</dbReference>
<dbReference type="GO" id="GO:0006607">
    <property type="term" value="P:NLS-bearing protein import into nucleus"/>
    <property type="evidence" value="ECO:0000315"/>
    <property type="project" value="FlyBase"/>
</dbReference>
<dbReference type="GO" id="GO:0006999">
    <property type="term" value="P:nuclear pore organization"/>
    <property type="evidence" value="ECO:0000318"/>
    <property type="project" value="GO_Central"/>
</dbReference>
<dbReference type="GO" id="GO:0006913">
    <property type="term" value="P:nucleocytoplasmic transport"/>
    <property type="evidence" value="ECO:0000250"/>
    <property type="project" value="UniProtKB"/>
</dbReference>
<dbReference type="GO" id="GO:0006606">
    <property type="term" value="P:protein import into nucleus"/>
    <property type="evidence" value="ECO:0000315"/>
    <property type="project" value="FlyBase"/>
</dbReference>
<dbReference type="GO" id="GO:0036228">
    <property type="term" value="P:protein localization to nuclear inner membrane"/>
    <property type="evidence" value="ECO:0000318"/>
    <property type="project" value="GO_Central"/>
</dbReference>
<dbReference type="GO" id="GO:0006605">
    <property type="term" value="P:protein targeting"/>
    <property type="evidence" value="ECO:0000250"/>
    <property type="project" value="UniProtKB"/>
</dbReference>
<dbReference type="FunFam" id="1.20.5.490:FF:000003">
    <property type="entry name" value="nucleoporin p54 isoform X1"/>
    <property type="match status" value="1"/>
</dbReference>
<dbReference type="Gene3D" id="1.20.5.490">
    <property type="entry name" value="Single helix bin"/>
    <property type="match status" value="1"/>
</dbReference>
<dbReference type="InterPro" id="IPR024864">
    <property type="entry name" value="Nup54/Nup57/Nup44"/>
</dbReference>
<dbReference type="InterPro" id="IPR025712">
    <property type="entry name" value="Nup54_alpha-helical_dom"/>
</dbReference>
<dbReference type="InterPro" id="IPR040985">
    <property type="entry name" value="Nup54_C"/>
</dbReference>
<dbReference type="PANTHER" id="PTHR13000">
    <property type="entry name" value="NUCLEOPORIN P54"/>
    <property type="match status" value="1"/>
</dbReference>
<dbReference type="PANTHER" id="PTHR13000:SF0">
    <property type="entry name" value="NUCLEOPORIN P54"/>
    <property type="match status" value="1"/>
</dbReference>
<dbReference type="Pfam" id="PF13874">
    <property type="entry name" value="Nup54"/>
    <property type="match status" value="1"/>
</dbReference>
<dbReference type="Pfam" id="PF18437">
    <property type="entry name" value="Nup54_C"/>
    <property type="match status" value="1"/>
</dbReference>
<name>NUP54_DROME</name>
<keyword id="KW-0509">mRNA transport</keyword>
<keyword id="KW-0906">Nuclear pore complex</keyword>
<keyword id="KW-0539">Nucleus</keyword>
<keyword id="KW-0653">Protein transport</keyword>
<keyword id="KW-1185">Reference proteome</keyword>
<keyword id="KW-0677">Repeat</keyword>
<keyword id="KW-0811">Translocation</keyword>
<keyword id="KW-0813">Transport</keyword>
<feature type="chain" id="PRO_0000204873" description="Probable nucleoporin Nup54">
    <location>
        <begin position="1"/>
        <end position="610"/>
    </location>
</feature>
<feature type="repeat" description="1">
    <location>
        <begin position="4"/>
        <end position="5"/>
    </location>
</feature>
<feature type="repeat" description="2">
    <location>
        <begin position="24"/>
        <end position="25"/>
    </location>
</feature>
<feature type="repeat" description="3">
    <location>
        <begin position="28"/>
        <end position="29"/>
    </location>
</feature>
<feature type="repeat" description="4">
    <location>
        <begin position="41"/>
        <end position="42"/>
    </location>
</feature>
<feature type="repeat" description="5">
    <location>
        <begin position="51"/>
        <end position="52"/>
    </location>
</feature>
<feature type="repeat" description="6">
    <location>
        <begin position="60"/>
        <end position="61"/>
    </location>
</feature>
<feature type="repeat" description="7">
    <location>
        <begin position="66"/>
        <end position="67"/>
    </location>
</feature>
<feature type="repeat" description="8">
    <location>
        <begin position="75"/>
        <end position="76"/>
    </location>
</feature>
<feature type="repeat" description="9">
    <location>
        <begin position="84"/>
        <end position="85"/>
    </location>
</feature>
<feature type="repeat" description="10">
    <location>
        <begin position="89"/>
        <end position="90"/>
    </location>
</feature>
<feature type="repeat" description="11">
    <location>
        <begin position="95"/>
        <end position="96"/>
    </location>
</feature>
<feature type="repeat" description="12">
    <location>
        <begin position="112"/>
        <end position="113"/>
    </location>
</feature>
<feature type="repeat" description="13">
    <location>
        <begin position="115"/>
        <end position="116"/>
    </location>
</feature>
<feature type="repeat" description="14">
    <location>
        <begin position="127"/>
        <end position="128"/>
    </location>
</feature>
<feature type="repeat" description="15">
    <location>
        <begin position="142"/>
        <end position="143"/>
    </location>
</feature>
<feature type="repeat" description="16">
    <location>
        <begin position="159"/>
        <end position="160"/>
    </location>
</feature>
<feature type="repeat" description="17">
    <location>
        <begin position="169"/>
        <end position="170"/>
    </location>
</feature>
<feature type="repeat" description="18">
    <location>
        <begin position="172"/>
        <end position="173"/>
    </location>
</feature>
<feature type="repeat" description="19">
    <location>
        <begin position="180"/>
        <end position="181"/>
    </location>
</feature>
<feature type="repeat" description="20">
    <location>
        <begin position="185"/>
        <end position="186"/>
    </location>
</feature>
<feature type="repeat" description="21">
    <location>
        <begin position="189"/>
        <end position="190"/>
    </location>
</feature>
<feature type="repeat" description="22">
    <location>
        <begin position="201"/>
        <end position="202"/>
    </location>
</feature>
<feature type="repeat" description="23">
    <location>
        <begin position="204"/>
        <end position="205"/>
    </location>
</feature>
<feature type="repeat" description="24">
    <location>
        <begin position="237"/>
        <end position="238"/>
    </location>
</feature>
<feature type="repeat" description="25">
    <location>
        <begin position="324"/>
        <end position="325"/>
    </location>
</feature>
<feature type="region of interest" description="25 X 2 AA repeats of F-G">
    <location>
        <begin position="4"/>
        <end position="554"/>
    </location>
</feature>
<reference key="1">
    <citation type="journal article" date="2000" name="Science">
        <title>The genome sequence of Drosophila melanogaster.</title>
        <authorList>
            <person name="Adams M.D."/>
            <person name="Celniker S.E."/>
            <person name="Holt R.A."/>
            <person name="Evans C.A."/>
            <person name="Gocayne J.D."/>
            <person name="Amanatides P.G."/>
            <person name="Scherer S.E."/>
            <person name="Li P.W."/>
            <person name="Hoskins R.A."/>
            <person name="Galle R.F."/>
            <person name="George R.A."/>
            <person name="Lewis S.E."/>
            <person name="Richards S."/>
            <person name="Ashburner M."/>
            <person name="Henderson S.N."/>
            <person name="Sutton G.G."/>
            <person name="Wortman J.R."/>
            <person name="Yandell M.D."/>
            <person name="Zhang Q."/>
            <person name="Chen L.X."/>
            <person name="Brandon R.C."/>
            <person name="Rogers Y.-H.C."/>
            <person name="Blazej R.G."/>
            <person name="Champe M."/>
            <person name="Pfeiffer B.D."/>
            <person name="Wan K.H."/>
            <person name="Doyle C."/>
            <person name="Baxter E.G."/>
            <person name="Helt G."/>
            <person name="Nelson C.R."/>
            <person name="Miklos G.L.G."/>
            <person name="Abril J.F."/>
            <person name="Agbayani A."/>
            <person name="An H.-J."/>
            <person name="Andrews-Pfannkoch C."/>
            <person name="Baldwin D."/>
            <person name="Ballew R.M."/>
            <person name="Basu A."/>
            <person name="Baxendale J."/>
            <person name="Bayraktaroglu L."/>
            <person name="Beasley E.M."/>
            <person name="Beeson K.Y."/>
            <person name="Benos P.V."/>
            <person name="Berman B.P."/>
            <person name="Bhandari D."/>
            <person name="Bolshakov S."/>
            <person name="Borkova D."/>
            <person name="Botchan M.R."/>
            <person name="Bouck J."/>
            <person name="Brokstein P."/>
            <person name="Brottier P."/>
            <person name="Burtis K.C."/>
            <person name="Busam D.A."/>
            <person name="Butler H."/>
            <person name="Cadieu E."/>
            <person name="Center A."/>
            <person name="Chandra I."/>
            <person name="Cherry J.M."/>
            <person name="Cawley S."/>
            <person name="Dahlke C."/>
            <person name="Davenport L.B."/>
            <person name="Davies P."/>
            <person name="de Pablos B."/>
            <person name="Delcher A."/>
            <person name="Deng Z."/>
            <person name="Mays A.D."/>
            <person name="Dew I."/>
            <person name="Dietz S.M."/>
            <person name="Dodson K."/>
            <person name="Doup L.E."/>
            <person name="Downes M."/>
            <person name="Dugan-Rocha S."/>
            <person name="Dunkov B.C."/>
            <person name="Dunn P."/>
            <person name="Durbin K.J."/>
            <person name="Evangelista C.C."/>
            <person name="Ferraz C."/>
            <person name="Ferriera S."/>
            <person name="Fleischmann W."/>
            <person name="Fosler C."/>
            <person name="Gabrielian A.E."/>
            <person name="Garg N.S."/>
            <person name="Gelbart W.M."/>
            <person name="Glasser K."/>
            <person name="Glodek A."/>
            <person name="Gong F."/>
            <person name="Gorrell J.H."/>
            <person name="Gu Z."/>
            <person name="Guan P."/>
            <person name="Harris M."/>
            <person name="Harris N.L."/>
            <person name="Harvey D.A."/>
            <person name="Heiman T.J."/>
            <person name="Hernandez J.R."/>
            <person name="Houck J."/>
            <person name="Hostin D."/>
            <person name="Houston K.A."/>
            <person name="Howland T.J."/>
            <person name="Wei M.-H."/>
            <person name="Ibegwam C."/>
            <person name="Jalali M."/>
            <person name="Kalush F."/>
            <person name="Karpen G.H."/>
            <person name="Ke Z."/>
            <person name="Kennison J.A."/>
            <person name="Ketchum K.A."/>
            <person name="Kimmel B.E."/>
            <person name="Kodira C.D."/>
            <person name="Kraft C.L."/>
            <person name="Kravitz S."/>
            <person name="Kulp D."/>
            <person name="Lai Z."/>
            <person name="Lasko P."/>
            <person name="Lei Y."/>
            <person name="Levitsky A.A."/>
            <person name="Li J.H."/>
            <person name="Li Z."/>
            <person name="Liang Y."/>
            <person name="Lin X."/>
            <person name="Liu X."/>
            <person name="Mattei B."/>
            <person name="McIntosh T.C."/>
            <person name="McLeod M.P."/>
            <person name="McPherson D."/>
            <person name="Merkulov G."/>
            <person name="Milshina N.V."/>
            <person name="Mobarry C."/>
            <person name="Morris J."/>
            <person name="Moshrefi A."/>
            <person name="Mount S.M."/>
            <person name="Moy M."/>
            <person name="Murphy B."/>
            <person name="Murphy L."/>
            <person name="Muzny D.M."/>
            <person name="Nelson D.L."/>
            <person name="Nelson D.R."/>
            <person name="Nelson K.A."/>
            <person name="Nixon K."/>
            <person name="Nusskern D.R."/>
            <person name="Pacleb J.M."/>
            <person name="Palazzolo M."/>
            <person name="Pittman G.S."/>
            <person name="Pan S."/>
            <person name="Pollard J."/>
            <person name="Puri V."/>
            <person name="Reese M.G."/>
            <person name="Reinert K."/>
            <person name="Remington K."/>
            <person name="Saunders R.D.C."/>
            <person name="Scheeler F."/>
            <person name="Shen H."/>
            <person name="Shue B.C."/>
            <person name="Siden-Kiamos I."/>
            <person name="Simpson M."/>
            <person name="Skupski M.P."/>
            <person name="Smith T.J."/>
            <person name="Spier E."/>
            <person name="Spradling A.C."/>
            <person name="Stapleton M."/>
            <person name="Strong R."/>
            <person name="Sun E."/>
            <person name="Svirskas R."/>
            <person name="Tector C."/>
            <person name="Turner R."/>
            <person name="Venter E."/>
            <person name="Wang A.H."/>
            <person name="Wang X."/>
            <person name="Wang Z.-Y."/>
            <person name="Wassarman D.A."/>
            <person name="Weinstock G.M."/>
            <person name="Weissenbach J."/>
            <person name="Williams S.M."/>
            <person name="Woodage T."/>
            <person name="Worley K.C."/>
            <person name="Wu D."/>
            <person name="Yang S."/>
            <person name="Yao Q.A."/>
            <person name="Ye J."/>
            <person name="Yeh R.-F."/>
            <person name="Zaveri J.S."/>
            <person name="Zhan M."/>
            <person name="Zhang G."/>
            <person name="Zhao Q."/>
            <person name="Zheng L."/>
            <person name="Zheng X.H."/>
            <person name="Zhong F.N."/>
            <person name="Zhong W."/>
            <person name="Zhou X."/>
            <person name="Zhu S.C."/>
            <person name="Zhu X."/>
            <person name="Smith H.O."/>
            <person name="Gibbs R.A."/>
            <person name="Myers E.W."/>
            <person name="Rubin G.M."/>
            <person name="Venter J.C."/>
        </authorList>
    </citation>
    <scope>NUCLEOTIDE SEQUENCE [LARGE SCALE GENOMIC DNA]</scope>
    <source>
        <strain>Berkeley</strain>
    </source>
</reference>
<reference key="2">
    <citation type="journal article" date="2002" name="Genome Biol.">
        <title>Annotation of the Drosophila melanogaster euchromatic genome: a systematic review.</title>
        <authorList>
            <person name="Misra S."/>
            <person name="Crosby M.A."/>
            <person name="Mungall C.J."/>
            <person name="Matthews B.B."/>
            <person name="Campbell K.S."/>
            <person name="Hradecky P."/>
            <person name="Huang Y."/>
            <person name="Kaminker J.S."/>
            <person name="Millburn G.H."/>
            <person name="Prochnik S.E."/>
            <person name="Smith C.D."/>
            <person name="Tupy J.L."/>
            <person name="Whitfield E.J."/>
            <person name="Bayraktaroglu L."/>
            <person name="Berman B.P."/>
            <person name="Bettencourt B.R."/>
            <person name="Celniker S.E."/>
            <person name="de Grey A.D.N.J."/>
            <person name="Drysdale R.A."/>
            <person name="Harris N.L."/>
            <person name="Richter J."/>
            <person name="Russo S."/>
            <person name="Schroeder A.J."/>
            <person name="Shu S.Q."/>
            <person name="Stapleton M."/>
            <person name="Yamada C."/>
            <person name="Ashburner M."/>
            <person name="Gelbart W.M."/>
            <person name="Rubin G.M."/>
            <person name="Lewis S.E."/>
        </authorList>
    </citation>
    <scope>GENOME REANNOTATION</scope>
    <source>
        <strain>Berkeley</strain>
    </source>
</reference>
<reference key="3">
    <citation type="journal article" date="2002" name="Genome Biol.">
        <title>A Drosophila full-length cDNA resource.</title>
        <authorList>
            <person name="Stapleton M."/>
            <person name="Carlson J.W."/>
            <person name="Brokstein P."/>
            <person name="Yu C."/>
            <person name="Champe M."/>
            <person name="George R.A."/>
            <person name="Guarin H."/>
            <person name="Kronmiller B."/>
            <person name="Pacleb J.M."/>
            <person name="Park S."/>
            <person name="Wan K.H."/>
            <person name="Rubin G.M."/>
            <person name="Celniker S.E."/>
        </authorList>
    </citation>
    <scope>NUCLEOTIDE SEQUENCE [LARGE SCALE MRNA]</scope>
    <source>
        <strain>Berkeley</strain>
        <tissue>Embryo</tissue>
    </source>
</reference>
<reference key="4">
    <citation type="journal article" date="2007" name="J. Cell Biol.">
        <title>Distinct functions of the Drosophila Nup153 and Nup214 FG domains in nuclear protein transport.</title>
        <authorList>
            <person name="Sabri N."/>
            <person name="Roth P."/>
            <person name="Xylourgidis N."/>
            <person name="Sadeghifar F."/>
            <person name="Adler J."/>
            <person name="Samakovlis C."/>
        </authorList>
    </citation>
    <scope>FUNCTION</scope>
    <scope>IDENTIFICATION IN THE NUCLEAR PORE COMPLEX</scope>
    <scope>SUBCELLULAR LOCATION</scope>
</reference>
<reference key="5">
    <citation type="journal article" date="2021" name="Elife">
        <title>Channel Nuclear Pore Complex subunits are required for transposon silencing in Drosophila.</title>
        <authorList>
            <person name="Munafo M."/>
            <person name="Lawless V.R."/>
            <person name="Passera A."/>
            <person name="MacMillan S."/>
            <person name="Borneloev S."/>
            <person name="Haussmann I.U."/>
            <person name="Soller M."/>
            <person name="Hannon G.J."/>
            <person name="Czech B."/>
        </authorList>
    </citation>
    <scope>FUNCTION</scope>
    <scope>INTERACTION WITH NUP58; FS(1)YB; SBR AND NXT1</scope>
</reference>
<evidence type="ECO:0000269" key="1">
    <source>
    </source>
</evidence>
<evidence type="ECO:0000269" key="2">
    <source>
    </source>
</evidence>
<evidence type="ECO:0000305" key="3"/>
<sequence>MSFFGSNTSLGATSTPAKTTGGLFGSPFGGTAATSQPAPAFGAQATSTPAFGAQPATSAFGAGSAFGATAAAPAFGAATGTSAFGGSAFGSTPAFGAATTTTAGTGLGGGGFGGFGAAPATSQAGLFGAPATSAAPPAFSGFGQQAAASTAPASGFSGFGTTTTSAPAFGGFGTSQSTGFGGGAFGSTFGKPANTTVTPGFGGFGGTSFMLGQPQQQPAPISADEAFAQSILNVSIFGDERDKIVAKWNYLQATWGTGKMFYSQSAAPVDITPENVMCRFKAIGYSRMPGKDNKLGLVALNFCRELSAVKPHQQQVIQTLHSLFGSKPNMLVHIDSIKELENKKCQIVIYVEEKLQHAPNESKRILATELSNYLNQATLKPQLNNLGVVEALALVLPDEDQLREYLENPPRGVDPRMWRQANSDNPDPTLYIPVPMVGFNDLKWRVKCQEQETDTHALYIKKVESELTELKKRHATATAKILEHKRKLAELSHRILRIIVKQECTRKVGTSLTPEEEALRTKLQNMLAVVSAPTQFKGRLSELLSQMRMQRNQFAANGGAEYALDKEAEDEMKTFLTMQQRAMEVLSDTVNKDLRALDVIIKGLPELRQS</sequence>
<comment type="function">
    <text evidence="1 2">Component of the nuclear pore complex (NPC), a complex required for the trafficking across the nuclear envelope (PubMed:17682050). Essential for the nuclear import of nuclear localization signal (NLS)-containing proteins in an importin alpha/importin beta-dependent manner (PubMed:17682050). Together with Nup58, required for transposable element silencing regulation in ovarian follicle cells (PubMed:33856346). By interacting with the nuclear (Nxf1/Nxt1) and cytosolic (fs(1)Yb) components of the flamenco (flam) transcripts processing pathway, enables export and subsequent piRNA production (PubMed:33856346).</text>
</comment>
<comment type="subunit">
    <text evidence="1 2">Component of the nuclear pore complex (PubMed:17682050). Interacts with Nup58 (PubMed:33856346). Interacts (via C-terminus) with fs(1)Yb; this interaction occurs in a RNA-independent manner (PubMed:33856346). Interacts with sbr/nxf1 (PubMed:33856346). Interacts with Nxt1 (PubMed:33856346).</text>
</comment>
<comment type="subcellular location">
    <subcellularLocation>
        <location evidence="1">Nucleus</location>
        <location evidence="1">Nuclear pore complex</location>
    </subcellularLocation>
</comment>
<comment type="domain">
    <text evidence="3">Contains FG repeats. FG repeats are interaction sites for karyopherins (importins, exportins) and form probably an affinity gradient, guiding the transport proteins unidirectionally with their cargo through the NPC. FG repeat regions are highly flexible and lack ordered secondary structure. The overall conservation of FG repeats regarding exact sequence, spacing, and repeat unit length is limited.</text>
</comment>
<comment type="similarity">
    <text evidence="3">Belongs to the NUP54 family.</text>
</comment>
<organism>
    <name type="scientific">Drosophila melanogaster</name>
    <name type="common">Fruit fly</name>
    <dbReference type="NCBI Taxonomy" id="7227"/>
    <lineage>
        <taxon>Eukaryota</taxon>
        <taxon>Metazoa</taxon>
        <taxon>Ecdysozoa</taxon>
        <taxon>Arthropoda</taxon>
        <taxon>Hexapoda</taxon>
        <taxon>Insecta</taxon>
        <taxon>Pterygota</taxon>
        <taxon>Neoptera</taxon>
        <taxon>Endopterygota</taxon>
        <taxon>Diptera</taxon>
        <taxon>Brachycera</taxon>
        <taxon>Muscomorpha</taxon>
        <taxon>Ephydroidea</taxon>
        <taxon>Drosophilidae</taxon>
        <taxon>Drosophila</taxon>
        <taxon>Sophophora</taxon>
    </lineage>
</organism>
<gene>
    <name type="primary">Nup54</name>
    <name type="ORF">CG8831</name>
</gene>
<proteinExistence type="evidence at protein level"/>